<comment type="function">
    <text evidence="2">Plays a role in viral entry into host cells. Forms a trimeric complex at the surface of the viral envelope together with gH and gL. This complex is required for entry in host fibroblasts (PubMed:28403202). Mechanistically, engages host receptor(s) including PDGFRA to mediate infection (PubMed:28403202).</text>
</comment>
<comment type="subunit">
    <text evidence="2">Forms the envelope trimer complex composed of gH, gL, and gO. The trimer interacts with host PDGFRA.</text>
</comment>
<comment type="subcellular location">
    <subcellularLocation>
        <location evidence="3">Virion membrane</location>
    </subcellularLocation>
    <text evidence="3">Host membrane associated, either via its interaction with gH, or as a type II transmembrane protein.</text>
</comment>
<comment type="PTM">
    <text>N-glycosylated.</text>
</comment>
<comment type="PTM">
    <text>The N-terminus is blocked.</text>
</comment>
<comment type="similarity">
    <text evidence="3">Belongs to the herpesviridae U47 family.</text>
</comment>
<gene>
    <name type="primary">UL74</name>
</gene>
<name>GO_HCMVM</name>
<organism>
    <name type="scientific">Human cytomegalovirus (strain Merlin)</name>
    <name type="common">HHV-5</name>
    <name type="synonym">Human herpesvirus 5</name>
    <dbReference type="NCBI Taxonomy" id="295027"/>
    <lineage>
        <taxon>Viruses</taxon>
        <taxon>Duplodnaviria</taxon>
        <taxon>Heunggongvirae</taxon>
        <taxon>Peploviricota</taxon>
        <taxon>Herviviricetes</taxon>
        <taxon>Herpesvirales</taxon>
        <taxon>Orthoherpesviridae</taxon>
        <taxon>Betaherpesvirinae</taxon>
        <taxon>Cytomegalovirus</taxon>
        <taxon>Cytomegalovirus humanbeta5</taxon>
        <taxon>Human cytomegalovirus</taxon>
    </lineage>
</organism>
<protein>
    <recommendedName>
        <fullName>Envelope glycoprotein O</fullName>
    </recommendedName>
</protein>
<reference key="1">
    <citation type="journal article" date="2004" name="J. Gen. Virol.">
        <title>Genetic content of wild-type human cytomegalovirus.</title>
        <authorList>
            <person name="Dolan A."/>
            <person name="Cunningham C."/>
            <person name="Hector R.D."/>
            <person name="Hassan-Walker A.F."/>
            <person name="Lee L."/>
            <person name="Addison C."/>
            <person name="Dargan D.J."/>
            <person name="McGeoch D.J."/>
            <person name="Gatherer D."/>
            <person name="Emery V.C."/>
            <person name="Griffiths P.D."/>
            <person name="Sinzger C."/>
            <person name="McSharry B.P."/>
            <person name="Wilkinson G.W.G."/>
            <person name="Davison A.J."/>
        </authorList>
    </citation>
    <scope>NUCLEOTIDE SEQUENCE [LARGE SCALE GENOMIC DNA]</scope>
</reference>
<reference key="2">
    <citation type="journal article" date="2017" name="PLoS Pathog.">
        <title>Human cytomegalovirus glycoprotein complex gH/gL/gO uses PDGFR-alpha as a key for entry.</title>
        <authorList>
            <person name="Wu Y."/>
            <person name="Prager A."/>
            <person name="Boos S."/>
            <person name="Resch M."/>
            <person name="Brizic I."/>
            <person name="Mach M."/>
            <person name="Wildner S."/>
            <person name="Scrivano L."/>
            <person name="Adler B."/>
        </authorList>
    </citation>
    <scope>FUNCTION</scope>
    <scope>INTERACTION WITH GL; GH AND HOST PDGFRA</scope>
</reference>
<keyword id="KW-0325">Glycoprotein</keyword>
<keyword id="KW-0472">Membrane</keyword>
<keyword id="KW-1185">Reference proteome</keyword>
<keyword id="KW-0732">Signal</keyword>
<keyword id="KW-0261">Viral envelope protein</keyword>
<keyword id="KW-0946">Virion</keyword>
<sequence>MGKKEMIMVKGIPKIMLLISITFLLLSLINCNVLVNSRGTRRSWPYTVLSYRGKEILKKQKEDILKRLMSTSSDGYRFLMYPSQQKFHAIVISMDKFPQDYILAGPIRNDSITHMWFDFYSTQLRKPAKYVYSEYNHTAHKITLRPPPCGTVPSMNCLSEMLNVSKRNDTGEKGCGNFTTFNPMFFNVPRWNTKLYIGSNKVNVDSQTIYFLGLTALLLRYAQRNCTRSFYLVNAMSRNLFRVPKYINGTKLKNTMRKLKRKQALVKEQPQKKNKKSQSTTTPYLSYTTSTAFNVTTNVTYSATAAVTRVATSTTGYRPDSNFMKSIMATQLRDLATWVYTTLRYRNEPFCKPDRNRTAVSEFMKNTHVLIRNETPYTIYGTLDMSSLYYNETMSVENETASDNNETTPTSPSTRFQRTFIDPLWDYLDSLLFLDKIRNFSLQLPAYGNLTPPEHRRAANLSTLNSLWWWSQ</sequence>
<accession>F5HGP1</accession>
<feature type="signal peptide" evidence="1">
    <location>
        <begin position="1"/>
        <end position="31"/>
    </location>
</feature>
<feature type="chain" id="PRO_0000418232" description="Envelope glycoprotein O">
    <location>
        <begin position="32"/>
        <end position="472"/>
    </location>
</feature>
<feature type="glycosylation site" description="N-linked (GlcNAc...) asparagine; by host" evidence="1">
    <location>
        <position position="109"/>
    </location>
</feature>
<feature type="glycosylation site" description="N-linked (GlcNAc...) asparagine; by host" evidence="1">
    <location>
        <position position="136"/>
    </location>
</feature>
<feature type="glycosylation site" description="N-linked (GlcNAc...) asparagine; by host" evidence="1">
    <location>
        <position position="163"/>
    </location>
</feature>
<feature type="glycosylation site" description="N-linked (GlcNAc...) asparagine; by host" evidence="1">
    <location>
        <position position="168"/>
    </location>
</feature>
<feature type="glycosylation site" description="N-linked (GlcNAc...) asparagine; by host" evidence="1">
    <location>
        <position position="177"/>
    </location>
</feature>
<feature type="glycosylation site" description="N-linked (GlcNAc...) asparagine; by host" evidence="1">
    <location>
        <position position="225"/>
    </location>
</feature>
<feature type="glycosylation site" description="N-linked (GlcNAc...) asparagine; by host" evidence="1">
    <location>
        <position position="248"/>
    </location>
</feature>
<feature type="glycosylation site" description="N-linked (GlcNAc...) asparagine; by host" evidence="1">
    <location>
        <position position="294"/>
    </location>
</feature>
<feature type="glycosylation site" description="N-linked (GlcNAc...) asparagine; by host" evidence="1">
    <location>
        <position position="298"/>
    </location>
</feature>
<feature type="glycosylation site" description="N-linked (GlcNAc...) asparagine; by host" evidence="1">
    <location>
        <position position="356"/>
    </location>
</feature>
<feature type="glycosylation site" description="N-linked (GlcNAc...) asparagine; by host" evidence="1">
    <location>
        <position position="391"/>
    </location>
</feature>
<feature type="glycosylation site" description="N-linked (GlcNAc...) asparagine; by host" evidence="1">
    <location>
        <position position="398"/>
    </location>
</feature>
<feature type="glycosylation site" description="N-linked (GlcNAc...) asparagine; by host" evidence="1">
    <location>
        <position position="405"/>
    </location>
</feature>
<feature type="glycosylation site" description="N-linked (GlcNAc...) asparagine; by host" evidence="1">
    <location>
        <position position="439"/>
    </location>
</feature>
<feature type="glycosylation site" description="N-linked (GlcNAc...) asparagine; by host" evidence="1">
    <location>
        <position position="460"/>
    </location>
</feature>
<evidence type="ECO:0000255" key="1"/>
<evidence type="ECO:0000269" key="2">
    <source>
    </source>
</evidence>
<evidence type="ECO:0000305" key="3"/>
<proteinExistence type="evidence at protein level"/>
<organismHost>
    <name type="scientific">Homo sapiens</name>
    <name type="common">Human</name>
    <dbReference type="NCBI Taxonomy" id="9606"/>
</organismHost>
<dbReference type="EMBL" id="AY446894">
    <property type="protein sequence ID" value="AAR31626.1"/>
    <property type="molecule type" value="Genomic_DNA"/>
</dbReference>
<dbReference type="RefSeq" id="YP_081522.1">
    <property type="nucleotide sequence ID" value="NC_006273.2"/>
</dbReference>
<dbReference type="SMR" id="F5HGP1"/>
<dbReference type="GlyCosmos" id="F5HGP1">
    <property type="glycosylation" value="15 sites, No reported glycans"/>
</dbReference>
<dbReference type="DNASU" id="3077572"/>
<dbReference type="GeneID" id="3077572"/>
<dbReference type="KEGG" id="vg:3077572"/>
<dbReference type="Reactome" id="R-HSA-9609690">
    <property type="pathway name" value="HCMV Early Events"/>
</dbReference>
<dbReference type="Reactome" id="R-HSA-9610379">
    <property type="pathway name" value="HCMV Late Events"/>
</dbReference>
<dbReference type="Proteomes" id="UP000000938">
    <property type="component" value="Segment"/>
</dbReference>
<dbReference type="GO" id="GO:0005886">
    <property type="term" value="C:plasma membrane"/>
    <property type="evidence" value="ECO:0000304"/>
    <property type="project" value="Reactome"/>
</dbReference>
<dbReference type="GO" id="GO:0019031">
    <property type="term" value="C:viral envelope"/>
    <property type="evidence" value="ECO:0000304"/>
    <property type="project" value="Reactome"/>
</dbReference>
<dbReference type="GO" id="GO:0055036">
    <property type="term" value="C:virion membrane"/>
    <property type="evidence" value="ECO:0007669"/>
    <property type="project" value="UniProtKB-SubCell"/>
</dbReference>
<dbReference type="GO" id="GO:0046597">
    <property type="term" value="P:host-mediated suppression of symbiont invasion"/>
    <property type="evidence" value="ECO:0000315"/>
    <property type="project" value="CACAO"/>
</dbReference>
<dbReference type="InterPro" id="IPR012564">
    <property type="entry name" value="Herpes_UL74"/>
</dbReference>
<dbReference type="Pfam" id="PF07982">
    <property type="entry name" value="Herpes_UL74"/>
    <property type="match status" value="1"/>
</dbReference>